<comment type="function">
    <text evidence="1">Part of a membrane-bound complex that couples electron transfer with translocation of ions across the membrane. Required to maintain the reduced state of SoxR.</text>
</comment>
<comment type="cofactor">
    <cofactor evidence="1">
        <name>FMN</name>
        <dbReference type="ChEBI" id="CHEBI:58210"/>
    </cofactor>
</comment>
<comment type="subunit">
    <text evidence="1">The complex is composed of six subunits: RsxA, RsxB, RsxC, RsxD, RsxE and RsxG.</text>
</comment>
<comment type="subcellular location">
    <subcellularLocation>
        <location evidence="1">Cell inner membrane</location>
        <topology evidence="1">Multi-pass membrane protein</topology>
    </subcellularLocation>
</comment>
<comment type="similarity">
    <text evidence="1">Belongs to the NqrB/RnfD family.</text>
</comment>
<reference key="1">
    <citation type="journal article" date="2001" name="Nature">
        <title>Complete genome sequence of a multiple drug resistant Salmonella enterica serovar Typhi CT18.</title>
        <authorList>
            <person name="Parkhill J."/>
            <person name="Dougan G."/>
            <person name="James K.D."/>
            <person name="Thomson N.R."/>
            <person name="Pickard D."/>
            <person name="Wain J."/>
            <person name="Churcher C.M."/>
            <person name="Mungall K.L."/>
            <person name="Bentley S.D."/>
            <person name="Holden M.T.G."/>
            <person name="Sebaihia M."/>
            <person name="Baker S."/>
            <person name="Basham D."/>
            <person name="Brooks K."/>
            <person name="Chillingworth T."/>
            <person name="Connerton P."/>
            <person name="Cronin A."/>
            <person name="Davis P."/>
            <person name="Davies R.M."/>
            <person name="Dowd L."/>
            <person name="White N."/>
            <person name="Farrar J."/>
            <person name="Feltwell T."/>
            <person name="Hamlin N."/>
            <person name="Haque A."/>
            <person name="Hien T.T."/>
            <person name="Holroyd S."/>
            <person name="Jagels K."/>
            <person name="Krogh A."/>
            <person name="Larsen T.S."/>
            <person name="Leather S."/>
            <person name="Moule S."/>
            <person name="O'Gaora P."/>
            <person name="Parry C."/>
            <person name="Quail M.A."/>
            <person name="Rutherford K.M."/>
            <person name="Simmonds M."/>
            <person name="Skelton J."/>
            <person name="Stevens K."/>
            <person name="Whitehead S."/>
            <person name="Barrell B.G."/>
        </authorList>
    </citation>
    <scope>NUCLEOTIDE SEQUENCE [LARGE SCALE GENOMIC DNA]</scope>
    <source>
        <strain>CT18</strain>
    </source>
</reference>
<reference key="2">
    <citation type="journal article" date="2003" name="J. Bacteriol.">
        <title>Comparative genomics of Salmonella enterica serovar Typhi strains Ty2 and CT18.</title>
        <authorList>
            <person name="Deng W."/>
            <person name="Liou S.-R."/>
            <person name="Plunkett G. III"/>
            <person name="Mayhew G.F."/>
            <person name="Rose D.J."/>
            <person name="Burland V."/>
            <person name="Kodoyianni V."/>
            <person name="Schwartz D.C."/>
            <person name="Blattner F.R."/>
        </authorList>
    </citation>
    <scope>NUCLEOTIDE SEQUENCE [LARGE SCALE GENOMIC DNA]</scope>
    <source>
        <strain>ATCC 700931 / Ty2</strain>
    </source>
</reference>
<feature type="chain" id="PRO_0000074461" description="Ion-translocating oxidoreductase complex subunit D">
    <location>
        <begin position="1"/>
        <end position="352"/>
    </location>
</feature>
<feature type="transmembrane region" description="Helical" evidence="1">
    <location>
        <begin position="20"/>
        <end position="40"/>
    </location>
</feature>
<feature type="transmembrane region" description="Helical" evidence="1">
    <location>
        <begin position="42"/>
        <end position="62"/>
    </location>
</feature>
<feature type="transmembrane region" description="Helical" evidence="1">
    <location>
        <begin position="69"/>
        <end position="91"/>
    </location>
</feature>
<feature type="transmembrane region" description="Helical" evidence="1">
    <location>
        <begin position="123"/>
        <end position="143"/>
    </location>
</feature>
<feature type="transmembrane region" description="Helical" evidence="1">
    <location>
        <begin position="215"/>
        <end position="235"/>
    </location>
</feature>
<feature type="transmembrane region" description="Helical" evidence="1">
    <location>
        <begin position="242"/>
        <end position="262"/>
    </location>
</feature>
<feature type="transmembrane region" description="Helical" evidence="1">
    <location>
        <begin position="267"/>
        <end position="287"/>
    </location>
</feature>
<feature type="transmembrane region" description="Helical" evidence="1">
    <location>
        <begin position="301"/>
        <end position="321"/>
    </location>
</feature>
<feature type="transmembrane region" description="Helical" evidence="1">
    <location>
        <begin position="322"/>
        <end position="342"/>
    </location>
</feature>
<feature type="modified residue" description="FMN phosphoryl threonine" evidence="1">
    <location>
        <position position="187"/>
    </location>
</feature>
<accession>Q8Z6Q8</accession>
<gene>
    <name evidence="1" type="primary">rsxD</name>
    <name type="ordered locus">STY1666</name>
    <name type="ordered locus">t1324</name>
</gene>
<organism>
    <name type="scientific">Salmonella typhi</name>
    <dbReference type="NCBI Taxonomy" id="90370"/>
    <lineage>
        <taxon>Bacteria</taxon>
        <taxon>Pseudomonadati</taxon>
        <taxon>Pseudomonadota</taxon>
        <taxon>Gammaproteobacteria</taxon>
        <taxon>Enterobacterales</taxon>
        <taxon>Enterobacteriaceae</taxon>
        <taxon>Salmonella</taxon>
    </lineage>
</organism>
<evidence type="ECO:0000255" key="1">
    <source>
        <dbReference type="HAMAP-Rule" id="MF_00462"/>
    </source>
</evidence>
<dbReference type="EC" id="7.-.-.-" evidence="1"/>
<dbReference type="EMBL" id="AL513382">
    <property type="protein sequence ID" value="CAD01911.1"/>
    <property type="molecule type" value="Genomic_DNA"/>
</dbReference>
<dbReference type="EMBL" id="AE014613">
    <property type="protein sequence ID" value="AAO68974.1"/>
    <property type="molecule type" value="Genomic_DNA"/>
</dbReference>
<dbReference type="RefSeq" id="NP_456074.1">
    <property type="nucleotide sequence ID" value="NC_003198.1"/>
</dbReference>
<dbReference type="RefSeq" id="WP_000231887.1">
    <property type="nucleotide sequence ID" value="NZ_WSUR01000011.1"/>
</dbReference>
<dbReference type="SMR" id="Q8Z6Q8"/>
<dbReference type="STRING" id="220341.gene:17585601"/>
<dbReference type="KEGG" id="stt:t1324"/>
<dbReference type="KEGG" id="sty:STY1666"/>
<dbReference type="PATRIC" id="fig|220341.7.peg.1676"/>
<dbReference type="eggNOG" id="COG4658">
    <property type="taxonomic scope" value="Bacteria"/>
</dbReference>
<dbReference type="HOGENOM" id="CLU_042020_0_0_6"/>
<dbReference type="OMA" id="RLWGGYP"/>
<dbReference type="OrthoDB" id="9776359at2"/>
<dbReference type="Proteomes" id="UP000000541">
    <property type="component" value="Chromosome"/>
</dbReference>
<dbReference type="Proteomes" id="UP000002670">
    <property type="component" value="Chromosome"/>
</dbReference>
<dbReference type="GO" id="GO:0005886">
    <property type="term" value="C:plasma membrane"/>
    <property type="evidence" value="ECO:0007669"/>
    <property type="project" value="UniProtKB-SubCell"/>
</dbReference>
<dbReference type="GO" id="GO:0022900">
    <property type="term" value="P:electron transport chain"/>
    <property type="evidence" value="ECO:0007669"/>
    <property type="project" value="UniProtKB-UniRule"/>
</dbReference>
<dbReference type="GO" id="GO:0055085">
    <property type="term" value="P:transmembrane transport"/>
    <property type="evidence" value="ECO:0007669"/>
    <property type="project" value="InterPro"/>
</dbReference>
<dbReference type="HAMAP" id="MF_00462">
    <property type="entry name" value="RsxD_RnfD"/>
    <property type="match status" value="1"/>
</dbReference>
<dbReference type="InterPro" id="IPR004338">
    <property type="entry name" value="NqrB/RnfD"/>
</dbReference>
<dbReference type="InterPro" id="IPR011303">
    <property type="entry name" value="RnfD_bac"/>
</dbReference>
<dbReference type="NCBIfam" id="NF002011">
    <property type="entry name" value="PRK00816.1"/>
    <property type="match status" value="1"/>
</dbReference>
<dbReference type="NCBIfam" id="TIGR01946">
    <property type="entry name" value="rnfD"/>
    <property type="match status" value="1"/>
</dbReference>
<dbReference type="PANTHER" id="PTHR30578">
    <property type="entry name" value="ELECTRON TRANSPORT COMPLEX PROTEIN RNFD"/>
    <property type="match status" value="1"/>
</dbReference>
<dbReference type="PANTHER" id="PTHR30578:SF0">
    <property type="entry name" value="ION-TRANSLOCATING OXIDOREDUCTASE COMPLEX SUBUNIT D"/>
    <property type="match status" value="1"/>
</dbReference>
<dbReference type="Pfam" id="PF03116">
    <property type="entry name" value="NQR2_RnfD_RnfE"/>
    <property type="match status" value="1"/>
</dbReference>
<proteinExistence type="inferred from homology"/>
<protein>
    <recommendedName>
        <fullName evidence="1">Ion-translocating oxidoreductase complex subunit D</fullName>
        <ecNumber evidence="1">7.-.-.-</ecNumber>
    </recommendedName>
    <alternativeName>
        <fullName evidence="1">Rsx electron transport complex subunit D</fullName>
    </alternativeName>
</protein>
<keyword id="KW-0997">Cell inner membrane</keyword>
<keyword id="KW-1003">Cell membrane</keyword>
<keyword id="KW-0249">Electron transport</keyword>
<keyword id="KW-0285">Flavoprotein</keyword>
<keyword id="KW-0288">FMN</keyword>
<keyword id="KW-0472">Membrane</keyword>
<keyword id="KW-0597">Phosphoprotein</keyword>
<keyword id="KW-1278">Translocase</keyword>
<keyword id="KW-0812">Transmembrane</keyword>
<keyword id="KW-1133">Transmembrane helix</keyword>
<keyword id="KW-0813">Transport</keyword>
<name>RSXD_SALTI</name>
<sequence>MVFRIASSPYTHNQRQTSRIMLLVLIAALPGIAAQTWFFGWGTLFQIVLAAITALVAEAIVLRLRKQSVASHLQDYSALLTGLLLAVSIPPLAPWWMVVLGTGFAIIIAKQLYGGLGQNPFNPAMIGYVVLLISFPVQMTSWLPPYEIAATTPDILDTLRMIFSGHTASGGDMTLLRIGIDGISQATPLDTFKTSLRAGHSVEQIMQYPIYSGALAGVGWQWVNLAWLVGGVFLLWQKAIRWHIPVSFLLTLALCAALGWLFSPATLASPQLHLLSGATMLGAFFILTDPVTASTTNRGRLIFGALAGVLVWLIRSFGGYPDGVAFAVLLANITVPLIDYYTRPRVYGHRKG</sequence>